<feature type="signal peptide" evidence="2">
    <location>
        <begin position="1"/>
        <end position="20"/>
    </location>
</feature>
<feature type="chain" id="PRO_0000331556" description="Organic solute transporter subunit beta">
    <location>
        <begin position="21"/>
        <end position="182"/>
    </location>
</feature>
<feature type="topological domain" description="Extracellular" evidence="2">
    <location>
        <begin position="21"/>
        <end position="64"/>
    </location>
</feature>
<feature type="transmembrane region" description="Helical" evidence="2">
    <location>
        <begin position="65"/>
        <end position="85"/>
    </location>
</feature>
<feature type="topological domain" description="Cytoplasmic" evidence="2">
    <location>
        <begin position="86"/>
        <end position="182"/>
    </location>
</feature>
<feature type="glycosylation site" description="N-linked (GlcNAc...) asparagine" evidence="2">
    <location>
        <position position="42"/>
    </location>
</feature>
<feature type="glycosylation site" description="N-linked (GlcNAc...) asparagine" evidence="2">
    <location>
        <position position="48"/>
    </location>
</feature>
<proteinExistence type="evidence at protein level"/>
<accession>Q90YM4</accession>
<protein>
    <recommendedName>
        <fullName>Organic solute transporter subunit beta</fullName>
        <shortName>OST-beta</shortName>
    </recommendedName>
    <alternativeName>
        <fullName>Solute carrier family 51 subunit beta</fullName>
    </alternativeName>
</protein>
<reference key="1">
    <citation type="journal article" date="2001" name="Proc. Natl. Acad. Sci. U.S.A.">
        <title>Expression cloning of two genes that together mediate organic solute and steroid transport in the liver of a marine vertebrate.</title>
        <authorList>
            <person name="Wang W."/>
            <person name="Seward D.J."/>
            <person name="Li L."/>
            <person name="Boyer J.L."/>
            <person name="Ballatori N."/>
        </authorList>
    </citation>
    <scope>NUCLEOTIDE SEQUENCE [MRNA]</scope>
    <scope>FUNCTION</scope>
    <scope>PROBABLE SUBUNIT</scope>
    <scope>TISSUE SPECIFICITY</scope>
</reference>
<comment type="function">
    <text evidence="1 3">Essential component of the Ost-alpha/Ost-beta complex, a heterodimer that acts as the intestinal basolateral transporter responsible for bile acid export from enterocytes into portal blood. Efficiently transports the major species of bile acids. May modulate slc51a glycosylation, membrane trafficking and stability activities (By similarity). Able to transport taurocholate, estrone sulfate, digoxin, and prostaglandin E(2), but not p-aminohippurate or S-dinitrophenyl glutathione.</text>
</comment>
<comment type="subunit">
    <text evidence="4">Interacts with slc51a. The Ost-alpha/Ost-beta complex is a heterodimer composed of alpha (slc51a) and beta (slc51b) subunit; may induce the transport of slc51a from the endoplasmic reticulum to the plasma membrane (Probable).</text>
</comment>
<comment type="subcellular location">
    <subcellularLocation>
        <location evidence="1">Cell membrane</location>
        <topology evidence="1">Single-pass type I membrane protein</topology>
    </subcellularLocation>
</comment>
<comment type="tissue specificity">
    <text evidence="3">Expressed in liver.</text>
</comment>
<comment type="domain">
    <text evidence="1">The transmembrane domain (TM) is the major site of interaction with slc51a. The extracellular-membrane interface is absolutely required for transport activity. The intracellular-membrane interface is necessary for establishing the correct membrane orientation that is essential for the heterodimer Ost-alpha/Ost-beta complex formation and transport activity at the cell membrane surface (By similarity).</text>
</comment>
<comment type="similarity">
    <text evidence="4">Belongs to the OST-beta family.</text>
</comment>
<sequence>MSGLLKYLFGCFILCLLLQGKTHMTSATISKPHETIDIEKQNMTGERNSTLAQQLSFPMEDPTNWNYAILALAFVVLFLAFLILAQNSRANRTRKMKALNGAGGRNETEADSTQKAMMQYVVEVDNLAETDQMLQSKPTYISLNQVAQTSSPKVLPKEGQILVEWKDGNIGFLYTDSKEDDV</sequence>
<keyword id="KW-1003">Cell membrane</keyword>
<keyword id="KW-0325">Glycoprotein</keyword>
<keyword id="KW-0472">Membrane</keyword>
<keyword id="KW-0732">Signal</keyword>
<keyword id="KW-0812">Transmembrane</keyword>
<keyword id="KW-1133">Transmembrane helix</keyword>
<keyword id="KW-0813">Transport</keyword>
<gene>
    <name type="primary">slc51b</name>
    <name type="synonym">ostb</name>
</gene>
<name>OSTB_LEUER</name>
<evidence type="ECO:0000250" key="1"/>
<evidence type="ECO:0000255" key="2"/>
<evidence type="ECO:0000269" key="3">
    <source>
    </source>
</evidence>
<evidence type="ECO:0000305" key="4"/>
<dbReference type="EMBL" id="AY027665">
    <property type="protein sequence ID" value="AAK14806.1"/>
    <property type="molecule type" value="mRNA"/>
</dbReference>
<dbReference type="SMR" id="Q90YM4"/>
<dbReference type="TCDB" id="2.A.82.1.1">
    <property type="family name" value="the organic solute transporter (ost) family"/>
</dbReference>
<dbReference type="GlyCosmos" id="Q90YM4">
    <property type="glycosylation" value="2 sites, No reported glycans"/>
</dbReference>
<dbReference type="GO" id="GO:0016020">
    <property type="term" value="C:membrane"/>
    <property type="evidence" value="ECO:0000250"/>
    <property type="project" value="UniProtKB"/>
</dbReference>
<dbReference type="GO" id="GO:0005886">
    <property type="term" value="C:plasma membrane"/>
    <property type="evidence" value="ECO:0000250"/>
    <property type="project" value="UniProtKB"/>
</dbReference>
<dbReference type="GO" id="GO:0032991">
    <property type="term" value="C:protein-containing complex"/>
    <property type="evidence" value="ECO:0000250"/>
    <property type="project" value="UniProtKB"/>
</dbReference>
<dbReference type="GO" id="GO:0046982">
    <property type="term" value="F:protein heterodimerization activity"/>
    <property type="evidence" value="ECO:0000250"/>
    <property type="project" value="UniProtKB"/>
</dbReference>
<dbReference type="GO" id="GO:0022857">
    <property type="term" value="F:transmembrane transporter activity"/>
    <property type="evidence" value="ECO:0007669"/>
    <property type="project" value="InterPro"/>
</dbReference>
<dbReference type="GO" id="GO:0015721">
    <property type="term" value="P:bile acid and bile salt transport"/>
    <property type="evidence" value="ECO:0000250"/>
    <property type="project" value="UniProtKB"/>
</dbReference>
<dbReference type="GO" id="GO:0070863">
    <property type="term" value="P:positive regulation of protein exit from endoplasmic reticulum"/>
    <property type="evidence" value="ECO:0000250"/>
    <property type="project" value="UniProtKB"/>
</dbReference>
<dbReference type="GO" id="GO:0060050">
    <property type="term" value="P:positive regulation of protein glycosylation"/>
    <property type="evidence" value="ECO:0000250"/>
    <property type="project" value="UniProtKB"/>
</dbReference>
<dbReference type="GO" id="GO:0090314">
    <property type="term" value="P:positive regulation of protein targeting to membrane"/>
    <property type="evidence" value="ECO:0000250"/>
    <property type="project" value="UniProtKB"/>
</dbReference>
<dbReference type="GO" id="GO:0031647">
    <property type="term" value="P:regulation of protein stability"/>
    <property type="evidence" value="ECO:0000250"/>
    <property type="project" value="UniProtKB"/>
</dbReference>
<dbReference type="InterPro" id="IPR052678">
    <property type="entry name" value="OST-beta_subunit"/>
</dbReference>
<dbReference type="InterPro" id="IPR029387">
    <property type="entry name" value="OSTbeta"/>
</dbReference>
<dbReference type="PANTHER" id="PTHR36129:SF3">
    <property type="match status" value="1"/>
</dbReference>
<dbReference type="PANTHER" id="PTHR36129">
    <property type="entry name" value="ORGANIC SOLUTE TRANSPORTER SUBUNIT BETA-RELATED"/>
    <property type="match status" value="1"/>
</dbReference>
<dbReference type="Pfam" id="PF15048">
    <property type="entry name" value="OSTbeta"/>
    <property type="match status" value="1"/>
</dbReference>
<organism>
    <name type="scientific">Leucoraja erinaceus</name>
    <name type="common">Little skate</name>
    <name type="synonym">Raja erinacea</name>
    <dbReference type="NCBI Taxonomy" id="7782"/>
    <lineage>
        <taxon>Eukaryota</taxon>
        <taxon>Metazoa</taxon>
        <taxon>Chordata</taxon>
        <taxon>Craniata</taxon>
        <taxon>Vertebrata</taxon>
        <taxon>Chondrichthyes</taxon>
        <taxon>Elasmobranchii</taxon>
        <taxon>Batoidea</taxon>
        <taxon>Rajiformes</taxon>
        <taxon>Rajidae</taxon>
        <taxon>Leucoraja</taxon>
    </lineage>
</organism>